<name>VEGFA_CANLF</name>
<dbReference type="EMBL" id="AJ133758">
    <property type="protein sequence ID" value="CAB82426.1"/>
    <property type="molecule type" value="mRNA"/>
</dbReference>
<dbReference type="EMBL" id="AF133250">
    <property type="protein sequence ID" value="AAD29684.1"/>
    <property type="molecule type" value="mRNA"/>
</dbReference>
<dbReference type="EMBL" id="AF133249">
    <property type="protein sequence ID" value="AAD29683.1"/>
    <property type="molecule type" value="mRNA"/>
</dbReference>
<dbReference type="EMBL" id="AF133248">
    <property type="protein sequence ID" value="AAD29682.1"/>
    <property type="molecule type" value="mRNA"/>
</dbReference>
<dbReference type="RefSeq" id="NP_001003175.2">
    <property type="nucleotide sequence ID" value="NM_001003175.2"/>
</dbReference>
<dbReference type="RefSeq" id="NP_001103971.1">
    <molecule id="Q9MYV3-2"/>
    <property type="nucleotide sequence ID" value="NM_001110501.1"/>
</dbReference>
<dbReference type="RefSeq" id="NP_001103972.1">
    <molecule id="Q9MYV3-3"/>
    <property type="nucleotide sequence ID" value="NM_001110502.1"/>
</dbReference>
<dbReference type="BMRB" id="Q9MYV3"/>
<dbReference type="SMR" id="Q9MYV3"/>
<dbReference type="DIP" id="DIP-29294N"/>
<dbReference type="FunCoup" id="Q9MYV3">
    <property type="interactions" value="271"/>
</dbReference>
<dbReference type="IntAct" id="Q9MYV3">
    <property type="interactions" value="1"/>
</dbReference>
<dbReference type="STRING" id="9615.ENSCAFP00000041911"/>
<dbReference type="GlyCosmos" id="Q9MYV3">
    <property type="glycosylation" value="1 site, No reported glycans"/>
</dbReference>
<dbReference type="PaxDb" id="9612-ENSCAFP00000041911"/>
<dbReference type="GeneID" id="403802"/>
<dbReference type="KEGG" id="cfa:403802"/>
<dbReference type="CTD" id="7422"/>
<dbReference type="eggNOG" id="ENOG502QVI8">
    <property type="taxonomic scope" value="Eukaryota"/>
</dbReference>
<dbReference type="HOGENOM" id="CLU_042996_2_0_1"/>
<dbReference type="InParanoid" id="Q9MYV3"/>
<dbReference type="OrthoDB" id="6352355at2759"/>
<dbReference type="Proteomes" id="UP000002254">
    <property type="component" value="Unplaced"/>
</dbReference>
<dbReference type="Proteomes" id="UP000694429">
    <property type="component" value="Unplaced"/>
</dbReference>
<dbReference type="Proteomes" id="UP000694542">
    <property type="component" value="Unplaced"/>
</dbReference>
<dbReference type="Proteomes" id="UP000805418">
    <property type="component" value="Unplaced"/>
</dbReference>
<dbReference type="GO" id="GO:0009986">
    <property type="term" value="C:cell surface"/>
    <property type="evidence" value="ECO:0000250"/>
    <property type="project" value="UniProtKB"/>
</dbReference>
<dbReference type="GO" id="GO:0005737">
    <property type="term" value="C:cytoplasm"/>
    <property type="evidence" value="ECO:0000250"/>
    <property type="project" value="UniProtKB"/>
</dbReference>
<dbReference type="GO" id="GO:0005615">
    <property type="term" value="C:extracellular space"/>
    <property type="evidence" value="ECO:0000250"/>
    <property type="project" value="UniProtKB"/>
</dbReference>
<dbReference type="GO" id="GO:0016020">
    <property type="term" value="C:membrane"/>
    <property type="evidence" value="ECO:0007669"/>
    <property type="project" value="InterPro"/>
</dbReference>
<dbReference type="GO" id="GO:0030141">
    <property type="term" value="C:secretory granule"/>
    <property type="evidence" value="ECO:0000250"/>
    <property type="project" value="UniProtKB"/>
</dbReference>
<dbReference type="GO" id="GO:0042056">
    <property type="term" value="F:chemoattractant activity"/>
    <property type="evidence" value="ECO:0000250"/>
    <property type="project" value="UniProtKB"/>
</dbReference>
<dbReference type="GO" id="GO:0005125">
    <property type="term" value="F:cytokine activity"/>
    <property type="evidence" value="ECO:0000250"/>
    <property type="project" value="UniProtKB"/>
</dbReference>
<dbReference type="GO" id="GO:0001968">
    <property type="term" value="F:fibronectin binding"/>
    <property type="evidence" value="ECO:0000250"/>
    <property type="project" value="UniProtKB"/>
</dbReference>
<dbReference type="GO" id="GO:0008083">
    <property type="term" value="F:growth factor activity"/>
    <property type="evidence" value="ECO:0000250"/>
    <property type="project" value="UniProtKB"/>
</dbReference>
<dbReference type="GO" id="GO:0008201">
    <property type="term" value="F:heparin binding"/>
    <property type="evidence" value="ECO:0000250"/>
    <property type="project" value="UniProtKB"/>
</dbReference>
<dbReference type="GO" id="GO:0005161">
    <property type="term" value="F:platelet-derived growth factor receptor binding"/>
    <property type="evidence" value="ECO:0000250"/>
    <property type="project" value="UniProtKB"/>
</dbReference>
<dbReference type="GO" id="GO:0048018">
    <property type="term" value="F:receptor ligand activity"/>
    <property type="evidence" value="ECO:0000250"/>
    <property type="project" value="UniProtKB"/>
</dbReference>
<dbReference type="GO" id="GO:0043183">
    <property type="term" value="F:vascular endothelial growth factor receptor 1 binding"/>
    <property type="evidence" value="ECO:0000250"/>
    <property type="project" value="UniProtKB"/>
</dbReference>
<dbReference type="GO" id="GO:0043184">
    <property type="term" value="F:vascular endothelial growth factor receptor 2 binding"/>
    <property type="evidence" value="ECO:0000250"/>
    <property type="project" value="UniProtKB"/>
</dbReference>
<dbReference type="GO" id="GO:0005172">
    <property type="term" value="F:vascular endothelial growth factor receptor binding"/>
    <property type="evidence" value="ECO:0000250"/>
    <property type="project" value="UniProtKB"/>
</dbReference>
<dbReference type="GO" id="GO:0001525">
    <property type="term" value="P:angiogenesis"/>
    <property type="evidence" value="ECO:0000250"/>
    <property type="project" value="UniProtKB"/>
</dbReference>
<dbReference type="GO" id="GO:0002042">
    <property type="term" value="P:cell migration involved in sprouting angiogenesis"/>
    <property type="evidence" value="ECO:0000250"/>
    <property type="project" value="UniProtKB"/>
</dbReference>
<dbReference type="GO" id="GO:0071456">
    <property type="term" value="P:cellular response to hypoxia"/>
    <property type="evidence" value="ECO:0000250"/>
    <property type="project" value="UniProtKB"/>
</dbReference>
<dbReference type="GO" id="GO:0035767">
    <property type="term" value="P:endothelial cell chemotaxis"/>
    <property type="evidence" value="ECO:0000250"/>
    <property type="project" value="UniProtKB"/>
</dbReference>
<dbReference type="GO" id="GO:0050930">
    <property type="term" value="P:induction of positive chemotaxis"/>
    <property type="evidence" value="ECO:0000318"/>
    <property type="project" value="GO_Central"/>
</dbReference>
<dbReference type="GO" id="GO:0030225">
    <property type="term" value="P:macrophage differentiation"/>
    <property type="evidence" value="ECO:0000250"/>
    <property type="project" value="UniProtKB"/>
</dbReference>
<dbReference type="GO" id="GO:0030224">
    <property type="term" value="P:monocyte differentiation"/>
    <property type="evidence" value="ECO:0000250"/>
    <property type="project" value="UniProtKB"/>
</dbReference>
<dbReference type="GO" id="GO:0097475">
    <property type="term" value="P:motor neuron migration"/>
    <property type="evidence" value="ECO:0000250"/>
    <property type="project" value="UniProtKB"/>
</dbReference>
<dbReference type="GO" id="GO:0043066">
    <property type="term" value="P:negative regulation of apoptotic process"/>
    <property type="evidence" value="ECO:0000250"/>
    <property type="project" value="UniProtKB"/>
</dbReference>
<dbReference type="GO" id="GO:0007200">
    <property type="term" value="P:phospholipase C-activating G protein-coupled receptor signaling pathway"/>
    <property type="evidence" value="ECO:0000250"/>
    <property type="project" value="UniProtKB"/>
</dbReference>
<dbReference type="GO" id="GO:0045766">
    <property type="term" value="P:positive regulation of angiogenesis"/>
    <property type="evidence" value="ECO:0000250"/>
    <property type="project" value="UniProtKB"/>
</dbReference>
<dbReference type="GO" id="GO:0043536">
    <property type="term" value="P:positive regulation of blood vessel endothelial cell migration"/>
    <property type="evidence" value="ECO:0000250"/>
    <property type="project" value="UniProtKB"/>
</dbReference>
<dbReference type="GO" id="GO:0045785">
    <property type="term" value="P:positive regulation of cell adhesion"/>
    <property type="evidence" value="ECO:0000250"/>
    <property type="project" value="UniProtKB"/>
</dbReference>
<dbReference type="GO" id="GO:0051781">
    <property type="term" value="P:positive regulation of cell division"/>
    <property type="evidence" value="ECO:0007669"/>
    <property type="project" value="UniProtKB-KW"/>
</dbReference>
<dbReference type="GO" id="GO:0090050">
    <property type="term" value="P:positive regulation of cell migration involved in sprouting angiogenesis"/>
    <property type="evidence" value="ECO:0000250"/>
    <property type="project" value="UniProtKB"/>
</dbReference>
<dbReference type="GO" id="GO:0008284">
    <property type="term" value="P:positive regulation of cell population proliferation"/>
    <property type="evidence" value="ECO:0000250"/>
    <property type="project" value="UniProtKB"/>
</dbReference>
<dbReference type="GO" id="GO:0038091">
    <property type="term" value="P:positive regulation of cell proliferation by VEGF-activated platelet derived growth factor receptor signaling pathway"/>
    <property type="evidence" value="ECO:0000250"/>
    <property type="project" value="UniProtKB"/>
</dbReference>
<dbReference type="GO" id="GO:0010595">
    <property type="term" value="P:positive regulation of endothelial cell migration"/>
    <property type="evidence" value="ECO:0000250"/>
    <property type="project" value="UniProtKB"/>
</dbReference>
<dbReference type="GO" id="GO:0001938">
    <property type="term" value="P:positive regulation of endothelial cell proliferation"/>
    <property type="evidence" value="ECO:0000250"/>
    <property type="project" value="UniProtKB"/>
</dbReference>
<dbReference type="GO" id="GO:0051894">
    <property type="term" value="P:positive regulation of focal adhesion assembly"/>
    <property type="evidence" value="ECO:0000250"/>
    <property type="project" value="UniProtKB"/>
</dbReference>
<dbReference type="GO" id="GO:0043410">
    <property type="term" value="P:positive regulation of MAPK cascade"/>
    <property type="evidence" value="ECO:0000250"/>
    <property type="project" value="UniProtKB"/>
</dbReference>
<dbReference type="GO" id="GO:0060754">
    <property type="term" value="P:positive regulation of mast cell chemotaxis"/>
    <property type="evidence" value="ECO:0000318"/>
    <property type="project" value="GO_Central"/>
</dbReference>
<dbReference type="GO" id="GO:0050927">
    <property type="term" value="P:positive regulation of positive chemotaxis"/>
    <property type="evidence" value="ECO:0000250"/>
    <property type="project" value="UniProtKB"/>
</dbReference>
<dbReference type="GO" id="GO:0001934">
    <property type="term" value="P:positive regulation of protein phosphorylation"/>
    <property type="evidence" value="ECO:0000250"/>
    <property type="project" value="UniProtKB"/>
</dbReference>
<dbReference type="GO" id="GO:0031334">
    <property type="term" value="P:positive regulation of protein-containing complex assembly"/>
    <property type="evidence" value="ECO:0000250"/>
    <property type="project" value="UniProtKB"/>
</dbReference>
<dbReference type="GO" id="GO:0002092">
    <property type="term" value="P:positive regulation of receptor internalization"/>
    <property type="evidence" value="ECO:0000250"/>
    <property type="project" value="UniProtKB"/>
</dbReference>
<dbReference type="GO" id="GO:0045944">
    <property type="term" value="P:positive regulation of transcription by RNA polymerase II"/>
    <property type="evidence" value="ECO:0000250"/>
    <property type="project" value="UniProtKB"/>
</dbReference>
<dbReference type="GO" id="GO:0008360">
    <property type="term" value="P:regulation of cell shape"/>
    <property type="evidence" value="ECO:0000250"/>
    <property type="project" value="UniProtKB"/>
</dbReference>
<dbReference type="GO" id="GO:0001666">
    <property type="term" value="P:response to hypoxia"/>
    <property type="evidence" value="ECO:0000250"/>
    <property type="project" value="UniProtKB"/>
</dbReference>
<dbReference type="GO" id="GO:0002040">
    <property type="term" value="P:sprouting angiogenesis"/>
    <property type="evidence" value="ECO:0000318"/>
    <property type="project" value="GO_Central"/>
</dbReference>
<dbReference type="GO" id="GO:0035148">
    <property type="term" value="P:tube formation"/>
    <property type="evidence" value="ECO:0000250"/>
    <property type="project" value="UniProtKB"/>
</dbReference>
<dbReference type="GO" id="GO:0048010">
    <property type="term" value="P:vascular endothelial growth factor receptor signaling pathway"/>
    <property type="evidence" value="ECO:0000250"/>
    <property type="project" value="UniProtKB"/>
</dbReference>
<dbReference type="GO" id="GO:0038084">
    <property type="term" value="P:vascular endothelial growth factor signaling pathway"/>
    <property type="evidence" value="ECO:0000318"/>
    <property type="project" value="GO_Central"/>
</dbReference>
<dbReference type="CDD" id="cd00135">
    <property type="entry name" value="PDGF"/>
    <property type="match status" value="1"/>
</dbReference>
<dbReference type="FunFam" id="2.10.160.10:FF:000001">
    <property type="entry name" value="Vascular endothelial growth factor A"/>
    <property type="match status" value="1"/>
</dbReference>
<dbReference type="FunFam" id="2.10.90.10:FF:000009">
    <property type="entry name" value="Vascular endothelial growth factor A"/>
    <property type="match status" value="1"/>
</dbReference>
<dbReference type="Gene3D" id="2.10.90.10">
    <property type="entry name" value="Cystine-knot cytokines"/>
    <property type="match status" value="1"/>
</dbReference>
<dbReference type="Gene3D" id="2.10.160.10">
    <property type="entry name" value="Vascular endothelial growth factor, heparin-binding domain"/>
    <property type="match status" value="1"/>
</dbReference>
<dbReference type="InterPro" id="IPR029034">
    <property type="entry name" value="Cystine-knot_cytokine"/>
</dbReference>
<dbReference type="InterPro" id="IPR023581">
    <property type="entry name" value="PD_growth_factor_CS"/>
</dbReference>
<dbReference type="InterPro" id="IPR000072">
    <property type="entry name" value="PDGF/VEGF_dom"/>
</dbReference>
<dbReference type="InterPro" id="IPR050507">
    <property type="entry name" value="PDGF/VEGF_growth_factor"/>
</dbReference>
<dbReference type="InterPro" id="IPR027928">
    <property type="entry name" value="VEGF_C"/>
</dbReference>
<dbReference type="InterPro" id="IPR036841">
    <property type="entry name" value="VEGF_C_sf"/>
</dbReference>
<dbReference type="PANTHER" id="PTHR12025">
    <property type="entry name" value="VASCULAR ENDOTHELIAL GROWTH FACTOR"/>
    <property type="match status" value="1"/>
</dbReference>
<dbReference type="PANTHER" id="PTHR12025:SF5">
    <property type="entry name" value="VASCULAR ENDOTHELIAL GROWTH FACTOR A, LONG FORM"/>
    <property type="match status" value="1"/>
</dbReference>
<dbReference type="Pfam" id="PF00341">
    <property type="entry name" value="PDGF"/>
    <property type="match status" value="1"/>
</dbReference>
<dbReference type="Pfam" id="PF14554">
    <property type="entry name" value="VEGF_C"/>
    <property type="match status" value="1"/>
</dbReference>
<dbReference type="SMART" id="SM00141">
    <property type="entry name" value="PDGF"/>
    <property type="match status" value="1"/>
</dbReference>
<dbReference type="SUPFAM" id="SSF57501">
    <property type="entry name" value="Cystine-knot cytokines"/>
    <property type="match status" value="1"/>
</dbReference>
<dbReference type="SUPFAM" id="SSF57593">
    <property type="entry name" value="Heparin-binding domain from vascular endothelial growth factor"/>
    <property type="match status" value="1"/>
</dbReference>
<dbReference type="PROSITE" id="PS00249">
    <property type="entry name" value="PDGF_1"/>
    <property type="match status" value="1"/>
</dbReference>
<dbReference type="PROSITE" id="PS50278">
    <property type="entry name" value="PDGF_2"/>
    <property type="match status" value="1"/>
</dbReference>
<feature type="signal peptide" evidence="5">
    <location>
        <begin position="1"/>
        <end position="26"/>
    </location>
</feature>
<feature type="chain" id="PRO_0000023384" description="Vascular endothelial growth factor A">
    <location>
        <begin position="27"/>
        <end position="214"/>
    </location>
</feature>
<feature type="region of interest" description="Disordered" evidence="6">
    <location>
        <begin position="131"/>
        <end position="162"/>
    </location>
</feature>
<feature type="compositionally biased region" description="Basic and acidic residues" evidence="6">
    <location>
        <begin position="131"/>
        <end position="142"/>
    </location>
</feature>
<feature type="compositionally biased region" description="Basic residues" evidence="6">
    <location>
        <begin position="143"/>
        <end position="159"/>
    </location>
</feature>
<feature type="glycosylation site" description="N-linked (GlcNAc...) asparagine" evidence="5">
    <location>
        <position position="100"/>
    </location>
</feature>
<feature type="disulfide bond" evidence="1">
    <location>
        <begin position="51"/>
        <end position="93"/>
    </location>
</feature>
<feature type="disulfide bond" description="Interchain" evidence="1">
    <location>
        <position position="76"/>
    </location>
</feature>
<feature type="disulfide bond" evidence="1">
    <location>
        <begin position="82"/>
        <end position="127"/>
    </location>
</feature>
<feature type="disulfide bond" description="Interchain" evidence="1">
    <location>
        <position position="85"/>
    </location>
</feature>
<feature type="disulfide bond" evidence="1">
    <location>
        <begin position="86"/>
        <end position="129"/>
    </location>
</feature>
<feature type="splice variant" id="VSP_004615" description="In isoform VEGF-164." evidence="7">
    <original>K</original>
    <variation>N</variation>
    <location>
        <position position="140"/>
    </location>
</feature>
<feature type="splice variant" id="VSP_004616" description="In isoform VEGF-164." evidence="7">
    <location>
        <begin position="141"/>
        <end position="164"/>
    </location>
</feature>
<feature type="splice variant" id="VSP_004617" description="In isoform VEGF-182." evidence="7">
    <location>
        <begin position="159"/>
        <end position="164"/>
    </location>
</feature>
<feature type="sequence conflict" description="In Ref. 2; AAD29683/AAD29684." evidence="8" ref="2">
    <original>I</original>
    <variation>V</variation>
    <location>
        <position position="143"/>
    </location>
</feature>
<feature type="sequence conflict" description="In Ref. 2; AAD29683/AAD29684." evidence="8" ref="2">
    <original>P</original>
    <variation>S</variation>
    <location>
        <position position="161"/>
    </location>
</feature>
<comment type="function">
    <text evidence="2 4">Growth factor active in angiogenesis, vasculogenesis and endothelial cell growth. Induces endothelial cell proliferation, promotes cell migration, inhibits apoptosis and induces permeabilization of blood vessels. Binds to the FLT1/VEGFR1 and KDR/VEGFR2 receptors, heparan sulfate and heparin (By similarity). Binding to NRP1 receptor initiates a signaling pathway needed for motor neuron axon guidance and cell body migration, including for the caudal migration of facial motor neurons from rhombomere 4 to rhombomere 6 during embryonic development (By similarity). Also binds the DEAR/FBXW7-AS1 receptor (By similarity).</text>
</comment>
<comment type="subunit">
    <text evidence="2 3">Homodimer; disulfide-linked (By similarity). Also found as heterodimer with PGF (By similarity). Interacts with NRP1 (By similarity). Interacts with BSG (By similarity). Interacts with CD82; this interaction inhibits VEGFA-mediated signaling pathway (By similarity).</text>
</comment>
<comment type="interaction">
    <interactant intactId="EBI-15622828">
        <id>Q9MYV3-3</id>
    </interactant>
    <interactant intactId="EBI-1005487">
        <id>P35968</id>
        <label>KDR</label>
    </interactant>
    <organismsDiffer>true</organismsDiffer>
    <experiments>2</experiments>
</comment>
<comment type="subcellular location">
    <subcellularLocation>
        <location evidence="1">Secreted</location>
    </subcellularLocation>
    <text evidence="1">Secreted but remains associated to cells or to the extracellular matrix unless released by heparin.</text>
</comment>
<comment type="alternative products">
    <event type="alternative splicing"/>
    <isoform>
        <id>Q9MYV3-1</id>
        <name>VEGF-188</name>
        <sequence type="displayed"/>
    </isoform>
    <isoform>
        <id>Q9MYV3-2</id>
        <name>VEGF-182</name>
        <sequence type="described" ref="VSP_004617"/>
    </isoform>
    <isoform>
        <id>Q9MYV3-3</id>
        <name>VEGF-164</name>
        <sequence type="described" ref="VSP_004615 VSP_004616"/>
    </isoform>
    <text>Additional isoforms seem to exist.</text>
</comment>
<comment type="similarity">
    <text evidence="8">Belongs to the PDGF/VEGF growth factor family.</text>
</comment>
<protein>
    <recommendedName>
        <fullName>Vascular endothelial growth factor A</fullName>
        <shortName>VEGF-A</shortName>
    </recommendedName>
    <alternativeName>
        <fullName>Vascular permeability factor</fullName>
        <shortName>VPF</shortName>
    </alternativeName>
</protein>
<keyword id="KW-0025">Alternative splicing</keyword>
<keyword id="KW-0037">Angiogenesis</keyword>
<keyword id="KW-0217">Developmental protein</keyword>
<keyword id="KW-0221">Differentiation</keyword>
<keyword id="KW-1015">Disulfide bond</keyword>
<keyword id="KW-0325">Glycoprotein</keyword>
<keyword id="KW-0339">Growth factor</keyword>
<keyword id="KW-0358">Heparin-binding</keyword>
<keyword id="KW-0497">Mitogen</keyword>
<keyword id="KW-1185">Reference proteome</keyword>
<keyword id="KW-0964">Secreted</keyword>
<keyword id="KW-0732">Signal</keyword>
<gene>
    <name type="primary">VEGFA</name>
    <name type="synonym">VEGF</name>
</gene>
<proteinExistence type="evidence at protein level"/>
<reference key="1">
    <citation type="journal article" date="1999" name="Biol. Chem.">
        <title>Vascular endothelial growth factor (VEGF) and its receptors in tumor-bearing dogs.</title>
        <authorList>
            <person name="Scheidegger P."/>
            <person name="Weiglhofer W."/>
            <person name="Suarez S."/>
            <person name="Kaser-Hotz B."/>
            <person name="Steiner R."/>
            <person name="Ballmer-Hofer K."/>
            <person name="Jaussi R."/>
        </authorList>
    </citation>
    <scope>NUCLEOTIDE SEQUENCE [MRNA] (ISOFORM VEGF-188)</scope>
</reference>
<reference key="2">
    <citation type="submission" date="1999-03" db="EMBL/GenBank/DDBJ databases">
        <authorList>
            <person name="Jingjing L."/>
            <person name="Roque R.S."/>
        </authorList>
    </citation>
    <scope>NUCLEOTIDE SEQUENCE [MRNA] (ISOFORMS VEGF-188; VEGF-182 AND VEGF-164)</scope>
    <source>
        <tissue>Heart</tissue>
    </source>
</reference>
<evidence type="ECO:0000250" key="1"/>
<evidence type="ECO:0000250" key="2">
    <source>
        <dbReference type="UniProtKB" id="P15692"/>
    </source>
</evidence>
<evidence type="ECO:0000250" key="3">
    <source>
        <dbReference type="UniProtKB" id="P16612"/>
    </source>
</evidence>
<evidence type="ECO:0000250" key="4">
    <source>
        <dbReference type="UniProtKB" id="Q00731"/>
    </source>
</evidence>
<evidence type="ECO:0000255" key="5"/>
<evidence type="ECO:0000256" key="6">
    <source>
        <dbReference type="SAM" id="MobiDB-lite"/>
    </source>
</evidence>
<evidence type="ECO:0000303" key="7">
    <source ref="2"/>
</evidence>
<evidence type="ECO:0000305" key="8"/>
<organism>
    <name type="scientific">Canis lupus familiaris</name>
    <name type="common">Dog</name>
    <name type="synonym">Canis familiaris</name>
    <dbReference type="NCBI Taxonomy" id="9615"/>
    <lineage>
        <taxon>Eukaryota</taxon>
        <taxon>Metazoa</taxon>
        <taxon>Chordata</taxon>
        <taxon>Craniata</taxon>
        <taxon>Vertebrata</taxon>
        <taxon>Euteleostomi</taxon>
        <taxon>Mammalia</taxon>
        <taxon>Eutheria</taxon>
        <taxon>Laurasiatheria</taxon>
        <taxon>Carnivora</taxon>
        <taxon>Caniformia</taxon>
        <taxon>Canidae</taxon>
        <taxon>Canis</taxon>
    </lineage>
</organism>
<sequence length="214" mass="25175">MNFLLSWVHWSLALLLYLHHAKWSQAAPMAGGEHKPHEVVKFMDVYQRSYCRPIETLVDIFQEYPDEIEYIFKPSCVPLMRCGGCCNDEGLECVPTEEFNITMQIMRIKPHQGQHIGEMSFLQHSKCECRPKKDRARQEKKSIRGKGKGQKRKRKKSRYKPWSVPCGPCSERRKHLFVQDPQTCKCSCKNTDSRCKARQLELNERTCRCDKPRR</sequence>
<accession>Q9MYV3</accession>
<accession>Q9XSF3</accession>
<accession>Q9XSF4</accession>
<accession>Q9XSF5</accession>